<keyword id="KW-0044">Antibiotic</keyword>
<keyword id="KW-0929">Antimicrobial</keyword>
<keyword id="KW-1015">Disulfide bond</keyword>
<keyword id="KW-0964">Secreted</keyword>
<keyword id="KW-0732">Signal</keyword>
<accession>B5G6G7</accession>
<reference key="1">
    <citation type="journal article" date="2008" name="Cell. Mol. Life Sci.">
        <title>Common evolution of waprin and Kunitz-like toxin families in Australian venomous snakes.</title>
        <authorList>
            <person name="St Pierre L."/>
            <person name="Earl S.T."/>
            <person name="Filippovich I."/>
            <person name="Sorokina N."/>
            <person name="Masci P.P."/>
            <person name="De Jersey J."/>
            <person name="Lavin M.F."/>
        </authorList>
    </citation>
    <scope>NUCLEOTIDE SEQUENCE [MRNA]</scope>
    <source>
        <tissue>Venom gland</tissue>
    </source>
</reference>
<protein>
    <recommendedName>
        <fullName evidence="5 8">Omwaprin-b</fullName>
    </recommendedName>
    <alternativeName>
        <fullName evidence="1">Oxywaprin-b</fullName>
    </alternativeName>
</protein>
<proteinExistence type="inferred from homology"/>
<name>WAPB_OXYMI</name>
<feature type="signal peptide" evidence="3">
    <location>
        <begin position="1"/>
        <end position="24"/>
    </location>
</feature>
<feature type="chain" id="PRO_5000395567" description="Omwaprin-b">
    <location>
        <begin position="25"/>
        <end position="74"/>
    </location>
</feature>
<feature type="domain" description="WAP" evidence="4">
    <location>
        <begin position="27"/>
        <end position="71"/>
    </location>
</feature>
<feature type="disulfide bond" evidence="2">
    <location>
        <begin position="34"/>
        <end position="59"/>
    </location>
</feature>
<feature type="disulfide bond" evidence="2">
    <location>
        <begin position="42"/>
        <end position="63"/>
    </location>
</feature>
<feature type="disulfide bond" evidence="2">
    <location>
        <begin position="46"/>
        <end position="58"/>
    </location>
</feature>
<feature type="disulfide bond" evidence="2">
    <location>
        <begin position="52"/>
        <end position="67"/>
    </location>
</feature>
<sequence>MSSGGLLLLLGLLTLWEVLTPVSSKDRPKKPGLCPPRPQKPCVKECKNDWSCPGQQKCCNYGCIDECRDPIFVN</sequence>
<organism>
    <name type="scientific">Oxyuranus microlepidotus</name>
    <name type="common">Inland taipan</name>
    <name type="synonym">Diemenia microlepidota</name>
    <dbReference type="NCBI Taxonomy" id="111177"/>
    <lineage>
        <taxon>Eukaryota</taxon>
        <taxon>Metazoa</taxon>
        <taxon>Chordata</taxon>
        <taxon>Craniata</taxon>
        <taxon>Vertebrata</taxon>
        <taxon>Euteleostomi</taxon>
        <taxon>Lepidosauria</taxon>
        <taxon>Squamata</taxon>
        <taxon>Bifurcata</taxon>
        <taxon>Unidentata</taxon>
        <taxon>Episquamata</taxon>
        <taxon>Toxicofera</taxon>
        <taxon>Serpentes</taxon>
        <taxon>Colubroidea</taxon>
        <taxon>Elapidae</taxon>
        <taxon>Hydrophiinae</taxon>
        <taxon>Oxyuranus</taxon>
    </lineage>
</organism>
<evidence type="ECO:0000250" key="1">
    <source>
        <dbReference type="UniProtKB" id="B5L5M9"/>
    </source>
</evidence>
<evidence type="ECO:0000250" key="2">
    <source>
        <dbReference type="UniProtKB" id="P83952"/>
    </source>
</evidence>
<evidence type="ECO:0000255" key="3"/>
<evidence type="ECO:0000255" key="4">
    <source>
        <dbReference type="PROSITE-ProRule" id="PRU00722"/>
    </source>
</evidence>
<evidence type="ECO:0000303" key="5">
    <source>
    </source>
</evidence>
<evidence type="ECO:0000305" key="6"/>
<evidence type="ECO:0000305" key="7">
    <source>
    </source>
</evidence>
<evidence type="ECO:0000312" key="8">
    <source>
        <dbReference type="EMBL" id="ABK63581.1"/>
    </source>
</evidence>
<dbReference type="EMBL" id="DQ917552">
    <property type="protein sequence ID" value="ABK63581.1"/>
    <property type="molecule type" value="mRNA"/>
</dbReference>
<dbReference type="SMR" id="B5G6G7"/>
<dbReference type="GO" id="GO:0005576">
    <property type="term" value="C:extracellular region"/>
    <property type="evidence" value="ECO:0000250"/>
    <property type="project" value="UniProtKB"/>
</dbReference>
<dbReference type="GO" id="GO:0005615">
    <property type="term" value="C:extracellular space"/>
    <property type="evidence" value="ECO:0007669"/>
    <property type="project" value="TreeGrafter"/>
</dbReference>
<dbReference type="GO" id="GO:0004867">
    <property type="term" value="F:serine-type endopeptidase inhibitor activity"/>
    <property type="evidence" value="ECO:0007669"/>
    <property type="project" value="TreeGrafter"/>
</dbReference>
<dbReference type="GO" id="GO:0019731">
    <property type="term" value="P:antibacterial humoral response"/>
    <property type="evidence" value="ECO:0007669"/>
    <property type="project" value="TreeGrafter"/>
</dbReference>
<dbReference type="GO" id="GO:0045087">
    <property type="term" value="P:innate immune response"/>
    <property type="evidence" value="ECO:0007669"/>
    <property type="project" value="TreeGrafter"/>
</dbReference>
<dbReference type="GO" id="GO:0044278">
    <property type="term" value="P:venom-mediated disruption of cell wall in another organism"/>
    <property type="evidence" value="ECO:0000250"/>
    <property type="project" value="UniProtKB"/>
</dbReference>
<dbReference type="Gene3D" id="4.10.75.10">
    <property type="entry name" value="Elafin-like"/>
    <property type="match status" value="1"/>
</dbReference>
<dbReference type="InterPro" id="IPR036645">
    <property type="entry name" value="Elafin-like_sf"/>
</dbReference>
<dbReference type="InterPro" id="IPR008197">
    <property type="entry name" value="WAP_dom"/>
</dbReference>
<dbReference type="InterPro" id="IPR050514">
    <property type="entry name" value="WAP_four-disulfide_core"/>
</dbReference>
<dbReference type="PANTHER" id="PTHR19441:SF30">
    <property type="entry name" value="ELAFIN"/>
    <property type="match status" value="1"/>
</dbReference>
<dbReference type="PANTHER" id="PTHR19441">
    <property type="entry name" value="WHEY ACDIC PROTEIN WAP"/>
    <property type="match status" value="1"/>
</dbReference>
<dbReference type="Pfam" id="PF00095">
    <property type="entry name" value="WAP"/>
    <property type="match status" value="1"/>
</dbReference>
<dbReference type="PRINTS" id="PR00003">
    <property type="entry name" value="4DISULPHCORE"/>
</dbReference>
<dbReference type="SMART" id="SM00217">
    <property type="entry name" value="WAP"/>
    <property type="match status" value="1"/>
</dbReference>
<dbReference type="SUPFAM" id="SSF57256">
    <property type="entry name" value="Elafin-like"/>
    <property type="match status" value="1"/>
</dbReference>
<dbReference type="PROSITE" id="PS51390">
    <property type="entry name" value="WAP"/>
    <property type="match status" value="1"/>
</dbReference>
<comment type="function">
    <text evidence="2">Damages membranes of susceptible bacteria. Has antibacterial activity against the Gram-positive bacteria B.megaterium and S.warneri. After 45 minutes of treatment with this protein, B.megaterium have no visible pili and are smooth. Has no antibacterial activity against the Gram-positive bacteria B.thuringiensis, S.aureus, S.clavuligerus and B. anthracis, or the Gram-negative bacteria E.coli and A.tumefaciens. Has no hemolytic activity. Does not inhibit the proteinases elastase and cathepsin G. Is not toxic to mice.</text>
</comment>
<comment type="subcellular location">
    <subcellularLocation>
        <location evidence="7">Secreted</location>
    </subcellularLocation>
</comment>
<comment type="tissue specificity">
    <text evidence="7">Expressed by the venom gland.</text>
</comment>
<comment type="similarity">
    <text evidence="6">Belongs to the venom waprin family.</text>
</comment>